<gene>
    <name evidence="1" type="primary">add</name>
    <name type="ordered locus">SO_4731</name>
</gene>
<feature type="chain" id="PRO_0000194385" description="Adenosine deaminase">
    <location>
        <begin position="1"/>
        <end position="331"/>
    </location>
</feature>
<feature type="active site" description="Proton donor" evidence="1">
    <location>
        <position position="200"/>
    </location>
</feature>
<feature type="binding site" evidence="1">
    <location>
        <position position="12"/>
    </location>
    <ligand>
        <name>Zn(2+)</name>
        <dbReference type="ChEBI" id="CHEBI:29105"/>
        <note>catalytic</note>
    </ligand>
</feature>
<feature type="binding site" evidence="1">
    <location>
        <position position="14"/>
    </location>
    <ligand>
        <name>substrate</name>
    </ligand>
</feature>
<feature type="binding site" evidence="1">
    <location>
        <position position="14"/>
    </location>
    <ligand>
        <name>Zn(2+)</name>
        <dbReference type="ChEBI" id="CHEBI:29105"/>
        <note>catalytic</note>
    </ligand>
</feature>
<feature type="binding site" evidence="1">
    <location>
        <position position="16"/>
    </location>
    <ligand>
        <name>substrate</name>
    </ligand>
</feature>
<feature type="binding site" evidence="1">
    <location>
        <position position="170"/>
    </location>
    <ligand>
        <name>substrate</name>
    </ligand>
</feature>
<feature type="binding site" evidence="1">
    <location>
        <position position="197"/>
    </location>
    <ligand>
        <name>Zn(2+)</name>
        <dbReference type="ChEBI" id="CHEBI:29105"/>
        <note>catalytic</note>
    </ligand>
</feature>
<feature type="binding site" evidence="1">
    <location>
        <position position="278"/>
    </location>
    <ligand>
        <name>Zn(2+)</name>
        <dbReference type="ChEBI" id="CHEBI:29105"/>
        <note>catalytic</note>
    </ligand>
</feature>
<feature type="binding site" evidence="1">
    <location>
        <position position="279"/>
    </location>
    <ligand>
        <name>substrate</name>
    </ligand>
</feature>
<feature type="site" description="Important for catalytic activity" evidence="1">
    <location>
        <position position="221"/>
    </location>
</feature>
<proteinExistence type="inferred from homology"/>
<comment type="function">
    <text evidence="1">Catalyzes the hydrolytic deamination of adenosine and 2-deoxyadenosine.</text>
</comment>
<comment type="catalytic activity">
    <reaction evidence="1">
        <text>adenosine + H2O + H(+) = inosine + NH4(+)</text>
        <dbReference type="Rhea" id="RHEA:24408"/>
        <dbReference type="ChEBI" id="CHEBI:15377"/>
        <dbReference type="ChEBI" id="CHEBI:15378"/>
        <dbReference type="ChEBI" id="CHEBI:16335"/>
        <dbReference type="ChEBI" id="CHEBI:17596"/>
        <dbReference type="ChEBI" id="CHEBI:28938"/>
        <dbReference type="EC" id="3.5.4.4"/>
    </reaction>
    <physiologicalReaction direction="left-to-right" evidence="1">
        <dbReference type="Rhea" id="RHEA:24409"/>
    </physiologicalReaction>
</comment>
<comment type="catalytic activity">
    <reaction evidence="1">
        <text>2'-deoxyadenosine + H2O + H(+) = 2'-deoxyinosine + NH4(+)</text>
        <dbReference type="Rhea" id="RHEA:28190"/>
        <dbReference type="ChEBI" id="CHEBI:15377"/>
        <dbReference type="ChEBI" id="CHEBI:15378"/>
        <dbReference type="ChEBI" id="CHEBI:17256"/>
        <dbReference type="ChEBI" id="CHEBI:28938"/>
        <dbReference type="ChEBI" id="CHEBI:28997"/>
        <dbReference type="EC" id="3.5.4.4"/>
    </reaction>
    <physiologicalReaction direction="left-to-right" evidence="1">
        <dbReference type="Rhea" id="RHEA:28191"/>
    </physiologicalReaction>
</comment>
<comment type="cofactor">
    <cofactor evidence="1">
        <name>Zn(2+)</name>
        <dbReference type="ChEBI" id="CHEBI:29105"/>
    </cofactor>
    <text evidence="1">Binds 1 zinc ion per subunit.</text>
</comment>
<comment type="similarity">
    <text evidence="1">Belongs to the metallo-dependent hydrolases superfamily. Adenosine and AMP deaminases family. Adenosine deaminase subfamily.</text>
</comment>
<dbReference type="EC" id="3.5.4.4" evidence="1"/>
<dbReference type="EMBL" id="AE014299">
    <property type="protein sequence ID" value="AAN57690.1"/>
    <property type="molecule type" value="Genomic_DNA"/>
</dbReference>
<dbReference type="RefSeq" id="NP_720247.1">
    <property type="nucleotide sequence ID" value="NC_004347.2"/>
</dbReference>
<dbReference type="RefSeq" id="WP_011074317.1">
    <property type="nucleotide sequence ID" value="NC_004347.2"/>
</dbReference>
<dbReference type="SMR" id="Q8E8D4"/>
<dbReference type="STRING" id="211586.SO_4731"/>
<dbReference type="PaxDb" id="211586-SO_4731"/>
<dbReference type="KEGG" id="son:SO_4731"/>
<dbReference type="PATRIC" id="fig|211586.12.peg.4588"/>
<dbReference type="eggNOG" id="COG1816">
    <property type="taxonomic scope" value="Bacteria"/>
</dbReference>
<dbReference type="HOGENOM" id="CLU_039228_0_2_6"/>
<dbReference type="OrthoDB" id="105475at2"/>
<dbReference type="PhylomeDB" id="Q8E8D4"/>
<dbReference type="BioCyc" id="SONE211586:G1GMP-4376-MONOMER"/>
<dbReference type="Proteomes" id="UP000008186">
    <property type="component" value="Chromosome"/>
</dbReference>
<dbReference type="GO" id="GO:0005829">
    <property type="term" value="C:cytosol"/>
    <property type="evidence" value="ECO:0000318"/>
    <property type="project" value="GO_Central"/>
</dbReference>
<dbReference type="GO" id="GO:0046936">
    <property type="term" value="F:2'-deoxyadenosine deaminase activity"/>
    <property type="evidence" value="ECO:0007669"/>
    <property type="project" value="RHEA"/>
</dbReference>
<dbReference type="GO" id="GO:0004000">
    <property type="term" value="F:adenosine deaminase activity"/>
    <property type="evidence" value="ECO:0000318"/>
    <property type="project" value="GO_Central"/>
</dbReference>
<dbReference type="GO" id="GO:0008270">
    <property type="term" value="F:zinc ion binding"/>
    <property type="evidence" value="ECO:0007669"/>
    <property type="project" value="UniProtKB-UniRule"/>
</dbReference>
<dbReference type="GO" id="GO:0006154">
    <property type="term" value="P:adenosine catabolic process"/>
    <property type="evidence" value="ECO:0000318"/>
    <property type="project" value="GO_Central"/>
</dbReference>
<dbReference type="GO" id="GO:0043103">
    <property type="term" value="P:hypoxanthine salvage"/>
    <property type="evidence" value="ECO:0000318"/>
    <property type="project" value="GO_Central"/>
</dbReference>
<dbReference type="GO" id="GO:0046103">
    <property type="term" value="P:inosine biosynthetic process"/>
    <property type="evidence" value="ECO:0000318"/>
    <property type="project" value="GO_Central"/>
</dbReference>
<dbReference type="GO" id="GO:0009117">
    <property type="term" value="P:nucleotide metabolic process"/>
    <property type="evidence" value="ECO:0007669"/>
    <property type="project" value="UniProtKB-KW"/>
</dbReference>
<dbReference type="GO" id="GO:0009168">
    <property type="term" value="P:purine ribonucleoside monophosphate biosynthetic process"/>
    <property type="evidence" value="ECO:0007669"/>
    <property type="project" value="UniProtKB-UniRule"/>
</dbReference>
<dbReference type="FunFam" id="3.20.20.140:FF:000009">
    <property type="entry name" value="Adenosine deaminase"/>
    <property type="match status" value="1"/>
</dbReference>
<dbReference type="Gene3D" id="3.20.20.140">
    <property type="entry name" value="Metal-dependent hydrolases"/>
    <property type="match status" value="1"/>
</dbReference>
<dbReference type="HAMAP" id="MF_00540">
    <property type="entry name" value="A_deaminase"/>
    <property type="match status" value="1"/>
</dbReference>
<dbReference type="InterPro" id="IPR028893">
    <property type="entry name" value="A_deaminase"/>
</dbReference>
<dbReference type="InterPro" id="IPR001365">
    <property type="entry name" value="A_deaminase_dom"/>
</dbReference>
<dbReference type="InterPro" id="IPR006330">
    <property type="entry name" value="Ado/ade_deaminase"/>
</dbReference>
<dbReference type="InterPro" id="IPR032466">
    <property type="entry name" value="Metal_Hydrolase"/>
</dbReference>
<dbReference type="NCBIfam" id="TIGR01430">
    <property type="entry name" value="aden_deam"/>
    <property type="match status" value="1"/>
</dbReference>
<dbReference type="NCBIfam" id="NF006846">
    <property type="entry name" value="PRK09358.1-1"/>
    <property type="match status" value="1"/>
</dbReference>
<dbReference type="PANTHER" id="PTHR11409">
    <property type="entry name" value="ADENOSINE DEAMINASE"/>
    <property type="match status" value="1"/>
</dbReference>
<dbReference type="PANTHER" id="PTHR11409:SF43">
    <property type="entry name" value="ADENOSINE DEAMINASE"/>
    <property type="match status" value="1"/>
</dbReference>
<dbReference type="Pfam" id="PF00962">
    <property type="entry name" value="A_deaminase"/>
    <property type="match status" value="1"/>
</dbReference>
<dbReference type="SUPFAM" id="SSF51556">
    <property type="entry name" value="Metallo-dependent hydrolases"/>
    <property type="match status" value="1"/>
</dbReference>
<protein>
    <recommendedName>
        <fullName evidence="1">Adenosine deaminase</fullName>
        <ecNumber evidence="1">3.5.4.4</ecNumber>
    </recommendedName>
    <alternativeName>
        <fullName evidence="1">Adenosine aminohydrolase</fullName>
    </alternativeName>
</protein>
<name>ADD_SHEON</name>
<keyword id="KW-0378">Hydrolase</keyword>
<keyword id="KW-0479">Metal-binding</keyword>
<keyword id="KW-0546">Nucleotide metabolism</keyword>
<keyword id="KW-1185">Reference proteome</keyword>
<keyword id="KW-0862">Zinc</keyword>
<reference key="1">
    <citation type="journal article" date="2002" name="Nat. Biotechnol.">
        <title>Genome sequence of the dissimilatory metal ion-reducing bacterium Shewanella oneidensis.</title>
        <authorList>
            <person name="Heidelberg J.F."/>
            <person name="Paulsen I.T."/>
            <person name="Nelson K.E."/>
            <person name="Gaidos E.J."/>
            <person name="Nelson W.C."/>
            <person name="Read T.D."/>
            <person name="Eisen J.A."/>
            <person name="Seshadri R."/>
            <person name="Ward N.L."/>
            <person name="Methe B.A."/>
            <person name="Clayton R.A."/>
            <person name="Meyer T."/>
            <person name="Tsapin A."/>
            <person name="Scott J."/>
            <person name="Beanan M.J."/>
            <person name="Brinkac L.M."/>
            <person name="Daugherty S.C."/>
            <person name="DeBoy R.T."/>
            <person name="Dodson R.J."/>
            <person name="Durkin A.S."/>
            <person name="Haft D.H."/>
            <person name="Kolonay J.F."/>
            <person name="Madupu R."/>
            <person name="Peterson J.D."/>
            <person name="Umayam L.A."/>
            <person name="White O."/>
            <person name="Wolf A.M."/>
            <person name="Vamathevan J.J."/>
            <person name="Weidman J.F."/>
            <person name="Impraim M."/>
            <person name="Lee K."/>
            <person name="Berry K.J."/>
            <person name="Lee C."/>
            <person name="Mueller J."/>
            <person name="Khouri H.M."/>
            <person name="Gill J."/>
            <person name="Utterback T.R."/>
            <person name="McDonald L.A."/>
            <person name="Feldblyum T.V."/>
            <person name="Smith H.O."/>
            <person name="Venter J.C."/>
            <person name="Nealson K.H."/>
            <person name="Fraser C.M."/>
        </authorList>
    </citation>
    <scope>NUCLEOTIDE SEQUENCE [LARGE SCALE GENOMIC DNA]</scope>
    <source>
        <strain>ATCC 700550 / JCM 31522 / CIP 106686 / LMG 19005 / NCIMB 14063 / MR-1</strain>
    </source>
</reference>
<accession>Q8E8D4</accession>
<sequence>MINTSIPLVDLHRHLDGNVRVNTIWELGHQHGIALPADSLETLAPFVQIQGKETSLVAFLKKLDWMVAVLADLDAVKRIAYENVADAALSGLDYAELRFSPYYMAMNHKLPIEGVVEAVIDGVKAGLKDYQVNINLIGIMSRSFGQPACTQELEGLLAHKQHLVAMDLAGDELGFPGELFNEHFKRVRDAGLAITAHAGEAAGSQSMWQAIQELGATRIGHGVNAIHDPKLMEYLAKHRIGIESCPTSNLHTSTVSSYAEHPFRTFMDAGVLIGLNTDDPGVSAIDIKHEYRIAKFELGLSDAELAQVQRNGVEMAFLSESERKALYAAKA</sequence>
<organism>
    <name type="scientific">Shewanella oneidensis (strain ATCC 700550 / JCM 31522 / CIP 106686 / LMG 19005 / NCIMB 14063 / MR-1)</name>
    <dbReference type="NCBI Taxonomy" id="211586"/>
    <lineage>
        <taxon>Bacteria</taxon>
        <taxon>Pseudomonadati</taxon>
        <taxon>Pseudomonadota</taxon>
        <taxon>Gammaproteobacteria</taxon>
        <taxon>Alteromonadales</taxon>
        <taxon>Shewanellaceae</taxon>
        <taxon>Shewanella</taxon>
    </lineage>
</organism>
<evidence type="ECO:0000255" key="1">
    <source>
        <dbReference type="HAMAP-Rule" id="MF_00540"/>
    </source>
</evidence>